<protein>
    <recommendedName>
        <fullName evidence="1">Pentafunctional AROM polypeptide 2</fullName>
    </recommendedName>
    <domain>
        <recommendedName>
            <fullName evidence="1">3-dehydroquinate synthase</fullName>
            <shortName evidence="1">DHQS</shortName>
            <ecNumber evidence="1">4.2.3.4</ecNumber>
        </recommendedName>
    </domain>
    <domain>
        <recommendedName>
            <fullName evidence="1">3-phosphoshikimate 1-carboxyvinyltransferase</fullName>
            <ecNumber evidence="1">2.5.1.19</ecNumber>
        </recommendedName>
        <alternativeName>
            <fullName evidence="1">5-enolpyruvylshikimate-3-phosphate synthase</fullName>
            <shortName evidence="1">EPSP synthase</shortName>
            <shortName evidence="1">EPSPS</shortName>
        </alternativeName>
    </domain>
    <domain>
        <recommendedName>
            <fullName evidence="1">Shikimate kinase</fullName>
            <shortName evidence="1">SK</shortName>
            <ecNumber evidence="1">2.7.1.71</ecNumber>
        </recommendedName>
    </domain>
    <domain>
        <recommendedName>
            <fullName evidence="1">3-dehydroquinate dehydratase</fullName>
            <shortName evidence="1">3-dehydroquinase</shortName>
            <ecNumber evidence="1">4.2.1.10</ecNumber>
        </recommendedName>
    </domain>
    <domain>
        <recommendedName>
            <fullName evidence="1">Shikimate dehydrogenase</fullName>
            <ecNumber evidence="1">1.1.1.25</ecNumber>
        </recommendedName>
    </domain>
</protein>
<comment type="function">
    <text evidence="1">The AROM polypeptide catalyzes 5 consecutive enzymatic reactions in prechorismate polyaromatic amino acid biosynthesis.</text>
</comment>
<comment type="catalytic activity">
    <reaction evidence="1">
        <text>7-phospho-2-dehydro-3-deoxy-D-arabino-heptonate = 3-dehydroquinate + phosphate</text>
        <dbReference type="Rhea" id="RHEA:21968"/>
        <dbReference type="ChEBI" id="CHEBI:32364"/>
        <dbReference type="ChEBI" id="CHEBI:43474"/>
        <dbReference type="ChEBI" id="CHEBI:58394"/>
        <dbReference type="EC" id="4.2.3.4"/>
    </reaction>
</comment>
<comment type="catalytic activity">
    <reaction evidence="1">
        <text>3-dehydroquinate = 3-dehydroshikimate + H2O</text>
        <dbReference type="Rhea" id="RHEA:21096"/>
        <dbReference type="ChEBI" id="CHEBI:15377"/>
        <dbReference type="ChEBI" id="CHEBI:16630"/>
        <dbReference type="ChEBI" id="CHEBI:32364"/>
        <dbReference type="EC" id="4.2.1.10"/>
    </reaction>
</comment>
<comment type="catalytic activity">
    <reaction evidence="1">
        <text>shikimate + NADP(+) = 3-dehydroshikimate + NADPH + H(+)</text>
        <dbReference type="Rhea" id="RHEA:17737"/>
        <dbReference type="ChEBI" id="CHEBI:15378"/>
        <dbReference type="ChEBI" id="CHEBI:16630"/>
        <dbReference type="ChEBI" id="CHEBI:36208"/>
        <dbReference type="ChEBI" id="CHEBI:57783"/>
        <dbReference type="ChEBI" id="CHEBI:58349"/>
        <dbReference type="EC" id="1.1.1.25"/>
    </reaction>
</comment>
<comment type="catalytic activity">
    <reaction evidence="1">
        <text>shikimate + ATP = 3-phosphoshikimate + ADP + H(+)</text>
        <dbReference type="Rhea" id="RHEA:13121"/>
        <dbReference type="ChEBI" id="CHEBI:15378"/>
        <dbReference type="ChEBI" id="CHEBI:30616"/>
        <dbReference type="ChEBI" id="CHEBI:36208"/>
        <dbReference type="ChEBI" id="CHEBI:145989"/>
        <dbReference type="ChEBI" id="CHEBI:456216"/>
        <dbReference type="EC" id="2.7.1.71"/>
    </reaction>
</comment>
<comment type="catalytic activity">
    <reaction evidence="1">
        <text>3-phosphoshikimate + phosphoenolpyruvate = 5-O-(1-carboxyvinyl)-3-phosphoshikimate + phosphate</text>
        <dbReference type="Rhea" id="RHEA:21256"/>
        <dbReference type="ChEBI" id="CHEBI:43474"/>
        <dbReference type="ChEBI" id="CHEBI:57701"/>
        <dbReference type="ChEBI" id="CHEBI:58702"/>
        <dbReference type="ChEBI" id="CHEBI:145989"/>
        <dbReference type="EC" id="2.5.1.19"/>
    </reaction>
</comment>
<comment type="cofactor">
    <cofactor>
        <name>Zn(2+)</name>
        <dbReference type="ChEBI" id="CHEBI:29105"/>
    </cofactor>
    <text>Binds 2 Zn(2+) ions per subunit.</text>
</comment>
<comment type="pathway">
    <text evidence="1">Metabolic intermediate biosynthesis; chorismate biosynthesis; chorismate from D-erythrose 4-phosphate and phosphoenolpyruvate: step 2/7.</text>
</comment>
<comment type="pathway">
    <text evidence="1">Metabolic intermediate biosynthesis; chorismate biosynthesis; chorismate from D-erythrose 4-phosphate and phosphoenolpyruvate: step 3/7.</text>
</comment>
<comment type="pathway">
    <text evidence="1">Metabolic intermediate biosynthesis; chorismate biosynthesis; chorismate from D-erythrose 4-phosphate and phosphoenolpyruvate: step 4/7.</text>
</comment>
<comment type="pathway">
    <text evidence="1">Metabolic intermediate biosynthesis; chorismate biosynthesis; chorismate from D-erythrose 4-phosphate and phosphoenolpyruvate: step 5/7.</text>
</comment>
<comment type="pathway">
    <text evidence="1">Metabolic intermediate biosynthesis; chorismate biosynthesis; chorismate from D-erythrose 4-phosphate and phosphoenolpyruvate: step 6/7.</text>
</comment>
<comment type="subunit">
    <text evidence="1">Homodimer.</text>
</comment>
<comment type="subcellular location">
    <subcellularLocation>
        <location evidence="1">Cytoplasm</location>
    </subcellularLocation>
</comment>
<comment type="similarity">
    <text evidence="1">In the N-terminal section; belongs to the sugar phosphate cyclases superfamily. Dehydroquinate synthase family.</text>
</comment>
<comment type="similarity">
    <text evidence="1">In the 2nd section; belongs to the EPSP synthase family.</text>
</comment>
<comment type="similarity">
    <text evidence="1">In the 3rd section; belongs to the shikimate kinase family.</text>
</comment>
<comment type="similarity">
    <text evidence="1">In the 4th section; belongs to the type-I 3-dehydroquinase family.</text>
</comment>
<comment type="similarity">
    <text evidence="1">In the C-terminal section; belongs to the shikimate dehydrogenase family.</text>
</comment>
<feature type="chain" id="PRO_0000406721" description="Pentafunctional AROM polypeptide 2">
    <location>
        <begin position="1"/>
        <end position="1551"/>
    </location>
</feature>
<feature type="region of interest" description="3-dehydroquinate synthase">
    <location>
        <begin position="1"/>
        <end position="379"/>
    </location>
</feature>
<feature type="region of interest" description="EPSP synthase">
    <location>
        <begin position="392"/>
        <end position="835"/>
    </location>
</feature>
<feature type="region of interest" description="Shikimate kinase">
    <location>
        <begin position="854"/>
        <end position="1044"/>
    </location>
</feature>
<feature type="region of interest" description="3-dehydroquinase">
    <location>
        <begin position="1045"/>
        <end position="1258"/>
    </location>
</feature>
<feature type="region of interest" description="Shikimate dehydrogenase">
    <location>
        <begin position="1271"/>
        <end position="1551"/>
    </location>
</feature>
<feature type="active site" description="Proton acceptor; for 3-dehydroquinate synthase activity" evidence="1">
    <location>
        <position position="253"/>
    </location>
</feature>
<feature type="active site" description="Proton acceptor; for 3-dehydroquinate synthase activity" evidence="1">
    <location>
        <position position="268"/>
    </location>
</feature>
<feature type="active site" description="Proton acceptor; for 3-dehydroquinate dehydratase activity" evidence="1">
    <location>
        <position position="1162"/>
    </location>
</feature>
<feature type="active site" description="Schiff-base intermediate with substrate; for 3-dehydroquinate dehydratase activity" evidence="1">
    <location>
        <position position="1191"/>
    </location>
</feature>
<feature type="binding site" evidence="1">
    <location>
        <begin position="42"/>
        <end position="44"/>
    </location>
    <ligand>
        <name>NAD(+)</name>
        <dbReference type="ChEBI" id="CHEBI:57540"/>
    </ligand>
</feature>
<feature type="binding site" evidence="1">
    <location>
        <begin position="80"/>
        <end position="83"/>
    </location>
    <ligand>
        <name>NAD(+)</name>
        <dbReference type="ChEBI" id="CHEBI:57540"/>
    </ligand>
</feature>
<feature type="binding site" evidence="1">
    <location>
        <begin position="111"/>
        <end position="113"/>
    </location>
    <ligand>
        <name>NAD(+)</name>
        <dbReference type="ChEBI" id="CHEBI:57540"/>
    </ligand>
</feature>
<feature type="binding site" evidence="1">
    <location>
        <position position="116"/>
    </location>
    <ligand>
        <name>NAD(+)</name>
        <dbReference type="ChEBI" id="CHEBI:57540"/>
    </ligand>
</feature>
<feature type="binding site" evidence="1">
    <location>
        <position position="127"/>
    </location>
    <ligand>
        <name>7-phospho-2-dehydro-3-deoxy-D-arabino-heptonate</name>
        <dbReference type="ChEBI" id="CHEBI:58394"/>
    </ligand>
</feature>
<feature type="binding site" evidence="1">
    <location>
        <begin position="136"/>
        <end position="137"/>
    </location>
    <ligand>
        <name>NAD(+)</name>
        <dbReference type="ChEBI" id="CHEBI:57540"/>
    </ligand>
</feature>
<feature type="binding site" evidence="1">
    <location>
        <position position="143"/>
    </location>
    <ligand>
        <name>7-phospho-2-dehydro-3-deoxy-D-arabino-heptonate</name>
        <dbReference type="ChEBI" id="CHEBI:58394"/>
    </ligand>
</feature>
<feature type="binding site" evidence="1">
    <location>
        <position position="149"/>
    </location>
    <ligand>
        <name>7-phospho-2-dehydro-3-deoxy-D-arabino-heptonate</name>
        <dbReference type="ChEBI" id="CHEBI:58394"/>
    </ligand>
</feature>
<feature type="binding site" evidence="1">
    <location>
        <position position="158"/>
    </location>
    <ligand>
        <name>NAD(+)</name>
        <dbReference type="ChEBI" id="CHEBI:57540"/>
    </ligand>
</feature>
<feature type="binding site" evidence="1">
    <location>
        <position position="159"/>
    </location>
    <ligand>
        <name>7-phospho-2-dehydro-3-deoxy-D-arabino-heptonate</name>
        <dbReference type="ChEBI" id="CHEBI:58394"/>
    </ligand>
</feature>
<feature type="binding site" evidence="1">
    <location>
        <begin position="176"/>
        <end position="179"/>
    </location>
    <ligand>
        <name>NAD(+)</name>
        <dbReference type="ChEBI" id="CHEBI:57540"/>
    </ligand>
</feature>
<feature type="binding site" evidence="1">
    <location>
        <position position="187"/>
    </location>
    <ligand>
        <name>NAD(+)</name>
        <dbReference type="ChEBI" id="CHEBI:57540"/>
    </ligand>
</feature>
<feature type="binding site" evidence="1">
    <location>
        <begin position="191"/>
        <end position="194"/>
    </location>
    <ligand>
        <name>7-phospho-2-dehydro-3-deoxy-D-arabino-heptonate</name>
        <dbReference type="ChEBI" id="CHEBI:58394"/>
    </ligand>
</feature>
<feature type="binding site" evidence="1">
    <location>
        <position position="191"/>
    </location>
    <ligand>
        <name>Zn(2+)</name>
        <dbReference type="ChEBI" id="CHEBI:29105"/>
        <note>catalytic</note>
    </ligand>
</feature>
<feature type="binding site" evidence="1">
    <location>
        <position position="243"/>
    </location>
    <ligand>
        <name>7-phospho-2-dehydro-3-deoxy-D-arabino-heptonate</name>
        <dbReference type="ChEBI" id="CHEBI:58394"/>
    </ligand>
</feature>
<feature type="binding site" evidence="1">
    <location>
        <begin position="257"/>
        <end position="261"/>
    </location>
    <ligand>
        <name>7-phospho-2-dehydro-3-deoxy-D-arabino-heptonate</name>
        <dbReference type="ChEBI" id="CHEBI:58394"/>
    </ligand>
</feature>
<feature type="binding site" evidence="1">
    <location>
        <position position="264"/>
    </location>
    <ligand>
        <name>7-phospho-2-dehydro-3-deoxy-D-arabino-heptonate</name>
        <dbReference type="ChEBI" id="CHEBI:58394"/>
    </ligand>
</feature>
<feature type="binding site" evidence="1">
    <location>
        <position position="264"/>
    </location>
    <ligand>
        <name>Zn(2+)</name>
        <dbReference type="ChEBI" id="CHEBI:29105"/>
        <note>catalytic</note>
    </ligand>
</feature>
<feature type="binding site" evidence="1">
    <location>
        <position position="280"/>
    </location>
    <ligand>
        <name>7-phospho-2-dehydro-3-deoxy-D-arabino-heptonate</name>
        <dbReference type="ChEBI" id="CHEBI:58394"/>
    </ligand>
</feature>
<feature type="binding site" evidence="1">
    <location>
        <position position="280"/>
    </location>
    <ligand>
        <name>Zn(2+)</name>
        <dbReference type="ChEBI" id="CHEBI:29105"/>
        <note>catalytic</note>
    </ligand>
</feature>
<feature type="binding site" evidence="1">
    <location>
        <position position="351"/>
    </location>
    <ligand>
        <name>7-phospho-2-dehydro-3-deoxy-D-arabino-heptonate</name>
        <dbReference type="ChEBI" id="CHEBI:58394"/>
    </ligand>
</feature>
<feature type="binding site" evidence="1">
    <location>
        <begin position="861"/>
        <end position="868"/>
    </location>
    <ligand>
        <name>ATP</name>
        <dbReference type="ChEBI" id="CHEBI:30616"/>
    </ligand>
</feature>
<evidence type="ECO:0000255" key="1">
    <source>
        <dbReference type="HAMAP-Rule" id="MF_03143"/>
    </source>
</evidence>
<organism>
    <name type="scientific">Lodderomyces elongisporus (strain ATCC 11503 / CBS 2605 / JCM 1781 / NBRC 1676 / NRRL YB-4239)</name>
    <name type="common">Yeast</name>
    <name type="synonym">Saccharomyces elongisporus</name>
    <dbReference type="NCBI Taxonomy" id="379508"/>
    <lineage>
        <taxon>Eukaryota</taxon>
        <taxon>Fungi</taxon>
        <taxon>Dikarya</taxon>
        <taxon>Ascomycota</taxon>
        <taxon>Saccharomycotina</taxon>
        <taxon>Pichiomycetes</taxon>
        <taxon>Debaryomycetaceae</taxon>
        <taxon>Candida/Lodderomyces clade</taxon>
        <taxon>Lodderomyces</taxon>
    </lineage>
</organism>
<accession>A5H2P4</accession>
<proteinExistence type="inferred from homology"/>
<reference key="1">
    <citation type="journal article" date="2009" name="Nature">
        <title>Evolution of pathogenicity and sexual reproduction in eight Candida genomes.</title>
        <authorList>
            <person name="Butler G."/>
            <person name="Rasmussen M.D."/>
            <person name="Lin M.F."/>
            <person name="Santos M.A.S."/>
            <person name="Sakthikumar S."/>
            <person name="Munro C.A."/>
            <person name="Rheinbay E."/>
            <person name="Grabherr M."/>
            <person name="Forche A."/>
            <person name="Reedy J.L."/>
            <person name="Agrafioti I."/>
            <person name="Arnaud M.B."/>
            <person name="Bates S."/>
            <person name="Brown A.J.P."/>
            <person name="Brunke S."/>
            <person name="Costanzo M.C."/>
            <person name="Fitzpatrick D.A."/>
            <person name="de Groot P.W.J."/>
            <person name="Harris D."/>
            <person name="Hoyer L.L."/>
            <person name="Hube B."/>
            <person name="Klis F.M."/>
            <person name="Kodira C."/>
            <person name="Lennard N."/>
            <person name="Logue M.E."/>
            <person name="Martin R."/>
            <person name="Neiman A.M."/>
            <person name="Nikolaou E."/>
            <person name="Quail M.A."/>
            <person name="Quinn J."/>
            <person name="Santos M.C."/>
            <person name="Schmitzberger F.F."/>
            <person name="Sherlock G."/>
            <person name="Shah P."/>
            <person name="Silverstein K.A.T."/>
            <person name="Skrzypek M.S."/>
            <person name="Soll D."/>
            <person name="Staggs R."/>
            <person name="Stansfield I."/>
            <person name="Stumpf M.P.H."/>
            <person name="Sudbery P.E."/>
            <person name="Srikantha T."/>
            <person name="Zeng Q."/>
            <person name="Berman J."/>
            <person name="Berriman M."/>
            <person name="Heitman J."/>
            <person name="Gow N.A.R."/>
            <person name="Lorenz M.C."/>
            <person name="Birren B.W."/>
            <person name="Kellis M."/>
            <person name="Cuomo C.A."/>
        </authorList>
    </citation>
    <scope>NUCLEOTIDE SEQUENCE [LARGE SCALE GENOMIC DNA]</scope>
    <source>
        <strain>ATCC 11503 / BCRC 21390 / CBS 2605 / JCM 1781 / NBRC 1676 / NRRL YB-4239</strain>
    </source>
</reference>
<dbReference type="EC" id="4.2.3.4" evidence="1"/>
<dbReference type="EC" id="2.5.1.19" evidence="1"/>
<dbReference type="EC" id="2.7.1.71" evidence="1"/>
<dbReference type="EC" id="4.2.1.10" evidence="1"/>
<dbReference type="EC" id="1.1.1.25" evidence="1"/>
<dbReference type="EMBL" id="DS236867">
    <property type="protein sequence ID" value="EDK47578.1"/>
    <property type="molecule type" value="Genomic_DNA"/>
</dbReference>
<dbReference type="RefSeq" id="XP_001528849.1">
    <property type="nucleotide sequence ID" value="XM_001528799.1"/>
</dbReference>
<dbReference type="SMR" id="A5H2P4"/>
<dbReference type="FunCoup" id="A5H2P4">
    <property type="interactions" value="466"/>
</dbReference>
<dbReference type="STRING" id="379508.A5H2P4"/>
<dbReference type="KEGG" id="lel:PVL30_003884"/>
<dbReference type="VEuPathDB" id="FungiDB:LELG_05759"/>
<dbReference type="eggNOG" id="KOG0692">
    <property type="taxonomic scope" value="Eukaryota"/>
</dbReference>
<dbReference type="HOGENOM" id="CLU_001201_1_2_1"/>
<dbReference type="InParanoid" id="A5H2P4"/>
<dbReference type="OMA" id="DVNCINF"/>
<dbReference type="OrthoDB" id="197068at2759"/>
<dbReference type="UniPathway" id="UPA00053">
    <property type="reaction ID" value="UER00085"/>
</dbReference>
<dbReference type="UniPathway" id="UPA00053">
    <property type="reaction ID" value="UER00086"/>
</dbReference>
<dbReference type="UniPathway" id="UPA00053">
    <property type="reaction ID" value="UER00087"/>
</dbReference>
<dbReference type="UniPathway" id="UPA00053">
    <property type="reaction ID" value="UER00088"/>
</dbReference>
<dbReference type="UniPathway" id="UPA00053">
    <property type="reaction ID" value="UER00089"/>
</dbReference>
<dbReference type="Proteomes" id="UP000001996">
    <property type="component" value="Unassembled WGS sequence"/>
</dbReference>
<dbReference type="GO" id="GO:0005737">
    <property type="term" value="C:cytoplasm"/>
    <property type="evidence" value="ECO:0007669"/>
    <property type="project" value="UniProtKB-SubCell"/>
</dbReference>
<dbReference type="GO" id="GO:0003855">
    <property type="term" value="F:3-dehydroquinate dehydratase activity"/>
    <property type="evidence" value="ECO:0007669"/>
    <property type="project" value="UniProtKB-UniRule"/>
</dbReference>
<dbReference type="GO" id="GO:0003856">
    <property type="term" value="F:3-dehydroquinate synthase activity"/>
    <property type="evidence" value="ECO:0007669"/>
    <property type="project" value="UniProtKB-UniRule"/>
</dbReference>
<dbReference type="GO" id="GO:0003866">
    <property type="term" value="F:3-phosphoshikimate 1-carboxyvinyltransferase activity"/>
    <property type="evidence" value="ECO:0007669"/>
    <property type="project" value="UniProtKB-UniRule"/>
</dbReference>
<dbReference type="GO" id="GO:0005524">
    <property type="term" value="F:ATP binding"/>
    <property type="evidence" value="ECO:0007669"/>
    <property type="project" value="UniProtKB-UniRule"/>
</dbReference>
<dbReference type="GO" id="GO:0046872">
    <property type="term" value="F:metal ion binding"/>
    <property type="evidence" value="ECO:0007669"/>
    <property type="project" value="UniProtKB-UniRule"/>
</dbReference>
<dbReference type="GO" id="GO:0004764">
    <property type="term" value="F:shikimate 3-dehydrogenase (NADP+) activity"/>
    <property type="evidence" value="ECO:0007669"/>
    <property type="project" value="UniProtKB-UniRule"/>
</dbReference>
<dbReference type="GO" id="GO:0004765">
    <property type="term" value="F:shikimate kinase activity"/>
    <property type="evidence" value="ECO:0007669"/>
    <property type="project" value="UniProtKB-UniRule"/>
</dbReference>
<dbReference type="GO" id="GO:0008652">
    <property type="term" value="P:amino acid biosynthetic process"/>
    <property type="evidence" value="ECO:0007669"/>
    <property type="project" value="UniProtKB-KW"/>
</dbReference>
<dbReference type="GO" id="GO:0009073">
    <property type="term" value="P:aromatic amino acid family biosynthetic process"/>
    <property type="evidence" value="ECO:0007669"/>
    <property type="project" value="UniProtKB-UniRule"/>
</dbReference>
<dbReference type="GO" id="GO:0009423">
    <property type="term" value="P:chorismate biosynthetic process"/>
    <property type="evidence" value="ECO:0007669"/>
    <property type="project" value="UniProtKB-UniRule"/>
</dbReference>
<dbReference type="CDD" id="cd00502">
    <property type="entry name" value="DHQase_I"/>
    <property type="match status" value="1"/>
</dbReference>
<dbReference type="CDD" id="cd08195">
    <property type="entry name" value="DHQS"/>
    <property type="match status" value="1"/>
</dbReference>
<dbReference type="CDD" id="cd01556">
    <property type="entry name" value="EPSP_synthase"/>
    <property type="match status" value="1"/>
</dbReference>
<dbReference type="CDD" id="cd01065">
    <property type="entry name" value="NAD_bind_Shikimate_DH"/>
    <property type="match status" value="1"/>
</dbReference>
<dbReference type="CDD" id="cd00464">
    <property type="entry name" value="SK"/>
    <property type="match status" value="1"/>
</dbReference>
<dbReference type="FunFam" id="1.20.1090.10:FF:000007">
    <property type="entry name" value="Pentafunctional AROM polypeptide"/>
    <property type="match status" value="1"/>
</dbReference>
<dbReference type="FunFam" id="3.20.20.70:FF:000135">
    <property type="entry name" value="Pentafunctional AROM polypeptide"/>
    <property type="match status" value="1"/>
</dbReference>
<dbReference type="FunFam" id="3.40.50.1970:FF:000007">
    <property type="entry name" value="Pentafunctional AROM polypeptide"/>
    <property type="match status" value="1"/>
</dbReference>
<dbReference type="FunFam" id="3.40.50.300:FF:001256">
    <property type="entry name" value="Pentafunctional AROM polypeptide"/>
    <property type="match status" value="1"/>
</dbReference>
<dbReference type="FunFam" id="3.65.10.10:FF:000007">
    <property type="entry name" value="Pentafunctional AROM polypeptide"/>
    <property type="match status" value="1"/>
</dbReference>
<dbReference type="Gene3D" id="3.40.50.1970">
    <property type="match status" value="1"/>
</dbReference>
<dbReference type="Gene3D" id="3.20.20.70">
    <property type="entry name" value="Aldolase class I"/>
    <property type="match status" value="1"/>
</dbReference>
<dbReference type="Gene3D" id="1.20.1090.10">
    <property type="entry name" value="Dehydroquinate synthase-like - alpha domain"/>
    <property type="match status" value="1"/>
</dbReference>
<dbReference type="Gene3D" id="3.65.10.10">
    <property type="entry name" value="Enolpyruvate transferase domain"/>
    <property type="match status" value="2"/>
</dbReference>
<dbReference type="Gene3D" id="3.40.50.10860">
    <property type="entry name" value="Leucine Dehydrogenase, chain A, domain 1"/>
    <property type="match status" value="1"/>
</dbReference>
<dbReference type="Gene3D" id="3.40.50.720">
    <property type="entry name" value="NAD(P)-binding Rossmann-like Domain"/>
    <property type="match status" value="1"/>
</dbReference>
<dbReference type="Gene3D" id="3.40.50.300">
    <property type="entry name" value="P-loop containing nucleotide triphosphate hydrolases"/>
    <property type="match status" value="1"/>
</dbReference>
<dbReference type="HAMAP" id="MF_00210">
    <property type="entry name" value="EPSP_synth"/>
    <property type="match status" value="1"/>
</dbReference>
<dbReference type="HAMAP" id="MF_03143">
    <property type="entry name" value="Pentafunct_AroM"/>
    <property type="match status" value="1"/>
</dbReference>
<dbReference type="HAMAP" id="MF_00109">
    <property type="entry name" value="Shikimate_kinase"/>
    <property type="match status" value="1"/>
</dbReference>
<dbReference type="InterPro" id="IPR013785">
    <property type="entry name" value="Aldolase_TIM"/>
</dbReference>
<dbReference type="InterPro" id="IPR046346">
    <property type="entry name" value="Aminoacid_DH-like_N_sf"/>
</dbReference>
<dbReference type="InterPro" id="IPR016037">
    <property type="entry name" value="DHQ_synth_AroB"/>
</dbReference>
<dbReference type="InterPro" id="IPR030960">
    <property type="entry name" value="DHQS/DOIS_N"/>
</dbReference>
<dbReference type="InterPro" id="IPR056179">
    <property type="entry name" value="DHQS_C"/>
</dbReference>
<dbReference type="InterPro" id="IPR001381">
    <property type="entry name" value="DHquinase_I"/>
</dbReference>
<dbReference type="InterPro" id="IPR001986">
    <property type="entry name" value="Enolpyruvate_Tfrase_dom"/>
</dbReference>
<dbReference type="InterPro" id="IPR036968">
    <property type="entry name" value="Enolpyruvate_Tfrase_sf"/>
</dbReference>
<dbReference type="InterPro" id="IPR006264">
    <property type="entry name" value="EPSP_synthase"/>
</dbReference>
<dbReference type="InterPro" id="IPR023193">
    <property type="entry name" value="EPSP_synthase_CS"/>
</dbReference>
<dbReference type="InterPro" id="IPR036291">
    <property type="entry name" value="NAD(P)-bd_dom_sf"/>
</dbReference>
<dbReference type="InterPro" id="IPR027417">
    <property type="entry name" value="P-loop_NTPase"/>
</dbReference>
<dbReference type="InterPro" id="IPR008289">
    <property type="entry name" value="Pentafunct_AroM"/>
</dbReference>
<dbReference type="InterPro" id="IPR013792">
    <property type="entry name" value="RNA3'P_cycl/enolpyr_Trfase_a/b"/>
</dbReference>
<dbReference type="InterPro" id="IPR041121">
    <property type="entry name" value="SDH_C"/>
</dbReference>
<dbReference type="InterPro" id="IPR031322">
    <property type="entry name" value="Shikimate/glucono_kinase"/>
</dbReference>
<dbReference type="InterPro" id="IPR013708">
    <property type="entry name" value="Shikimate_DH-bd_N"/>
</dbReference>
<dbReference type="InterPro" id="IPR010110">
    <property type="entry name" value="Shikimate_DH_AroM-type"/>
</dbReference>
<dbReference type="InterPro" id="IPR000623">
    <property type="entry name" value="Shikimate_kinase/TSH1"/>
</dbReference>
<dbReference type="InterPro" id="IPR023000">
    <property type="entry name" value="Shikimate_kinase_CS"/>
</dbReference>
<dbReference type="NCBIfam" id="TIGR01356">
    <property type="entry name" value="aroA"/>
    <property type="match status" value="1"/>
</dbReference>
<dbReference type="NCBIfam" id="TIGR01357">
    <property type="entry name" value="aroB"/>
    <property type="match status" value="1"/>
</dbReference>
<dbReference type="NCBIfam" id="TIGR01093">
    <property type="entry name" value="aroD"/>
    <property type="match status" value="1"/>
</dbReference>
<dbReference type="NCBIfam" id="TIGR01809">
    <property type="entry name" value="Shik-DH-AROM"/>
    <property type="match status" value="1"/>
</dbReference>
<dbReference type="PANTHER" id="PTHR21090">
    <property type="entry name" value="AROM/DEHYDROQUINATE SYNTHASE"/>
    <property type="match status" value="1"/>
</dbReference>
<dbReference type="PANTHER" id="PTHR21090:SF5">
    <property type="entry name" value="PENTAFUNCTIONAL AROM POLYPEPTIDE"/>
    <property type="match status" value="1"/>
</dbReference>
<dbReference type="Pfam" id="PF01761">
    <property type="entry name" value="DHQ_synthase"/>
    <property type="match status" value="1"/>
</dbReference>
<dbReference type="Pfam" id="PF24621">
    <property type="entry name" value="DHQS_C"/>
    <property type="match status" value="1"/>
</dbReference>
<dbReference type="Pfam" id="PF01487">
    <property type="entry name" value="DHquinase_I"/>
    <property type="match status" value="1"/>
</dbReference>
<dbReference type="Pfam" id="PF00275">
    <property type="entry name" value="EPSP_synthase"/>
    <property type="match status" value="1"/>
</dbReference>
<dbReference type="Pfam" id="PF18317">
    <property type="entry name" value="SDH_C"/>
    <property type="match status" value="1"/>
</dbReference>
<dbReference type="Pfam" id="PF08501">
    <property type="entry name" value="Shikimate_dh_N"/>
    <property type="match status" value="1"/>
</dbReference>
<dbReference type="Pfam" id="PF01202">
    <property type="entry name" value="SKI"/>
    <property type="match status" value="1"/>
</dbReference>
<dbReference type="PIRSF" id="PIRSF000514">
    <property type="entry name" value="Pentafunct_AroM"/>
    <property type="match status" value="1"/>
</dbReference>
<dbReference type="PRINTS" id="PR01100">
    <property type="entry name" value="SHIKIMTKNASE"/>
</dbReference>
<dbReference type="SUPFAM" id="SSF51569">
    <property type="entry name" value="Aldolase"/>
    <property type="match status" value="1"/>
</dbReference>
<dbReference type="SUPFAM" id="SSF53223">
    <property type="entry name" value="Aminoacid dehydrogenase-like, N-terminal domain"/>
    <property type="match status" value="1"/>
</dbReference>
<dbReference type="SUPFAM" id="SSF56796">
    <property type="entry name" value="Dehydroquinate synthase-like"/>
    <property type="match status" value="1"/>
</dbReference>
<dbReference type="SUPFAM" id="SSF55205">
    <property type="entry name" value="EPT/RTPC-like"/>
    <property type="match status" value="1"/>
</dbReference>
<dbReference type="SUPFAM" id="SSF51735">
    <property type="entry name" value="NAD(P)-binding Rossmann-fold domains"/>
    <property type="match status" value="1"/>
</dbReference>
<dbReference type="SUPFAM" id="SSF52540">
    <property type="entry name" value="P-loop containing nucleoside triphosphate hydrolases"/>
    <property type="match status" value="1"/>
</dbReference>
<dbReference type="PROSITE" id="PS00104">
    <property type="entry name" value="EPSP_SYNTHASE_1"/>
    <property type="match status" value="1"/>
</dbReference>
<dbReference type="PROSITE" id="PS00885">
    <property type="entry name" value="EPSP_SYNTHASE_2"/>
    <property type="match status" value="1"/>
</dbReference>
<dbReference type="PROSITE" id="PS01128">
    <property type="entry name" value="SHIKIMATE_KINASE"/>
    <property type="match status" value="1"/>
</dbReference>
<keyword id="KW-0028">Amino-acid biosynthesis</keyword>
<keyword id="KW-0057">Aromatic amino acid biosynthesis</keyword>
<keyword id="KW-0067">ATP-binding</keyword>
<keyword id="KW-0963">Cytoplasm</keyword>
<keyword id="KW-0418">Kinase</keyword>
<keyword id="KW-0456">Lyase</keyword>
<keyword id="KW-0479">Metal-binding</keyword>
<keyword id="KW-0511">Multifunctional enzyme</keyword>
<keyword id="KW-0521">NADP</keyword>
<keyword id="KW-0547">Nucleotide-binding</keyword>
<keyword id="KW-0560">Oxidoreductase</keyword>
<keyword id="KW-1185">Reference proteome</keyword>
<keyword id="KW-0808">Transferase</keyword>
<keyword id="KW-0862">Zinc</keyword>
<name>ARO12_LODEL</name>
<sequence>MSIEKVSILGKESIHVGYGIQSHIVEETIKCLASSTYVIISDTNMSKTPTYEKLQDSFQKELAKQRPQSRLLTYLIPPGENHKNRETKAEVEDFLLQQGCTRDTVILAVGGGVIGDMIGFVAATFMRGVRVVQVPTTLLSMVDSSVGGKTAIDTELGKNFIGAFHQPEFVFCDVSFLQTLPKRQLINGMAEVVKTAAIWDETEFTRLEGFAKRFLAEISAPTPNLESIKDELIKTVLGSVRVKAFVVSADEKEGGLRNLLNFGHTIGHAIEAILTPEALHGECVSIGMIKEAELSRYLGILPPSAVARLSKCLAAYGLPISVDEKIFSKIIGAKKNNLKIDSLIKKMLIDKKNDGSKIRCVLLESIGKCYESKAHQIFKEDIQVVMTDEVFVHPFANRHPESVSITPPGSKSISNRALILAALGEGTTRIKNLLHSDDTKHMLDAVVLMKGATVSFEDSGDTVVVQGHGGKLFACKEEIYLGNAGTASRFLTAVAALVNSTQDEKSVTLTGNARMQERPIAALVDALTTNGSKVDYLNKQGSLPLKIEAGNGFKGGRIELAATTSSQYVSAILMCAPYAEKEVTLSLVGGKPISQLYIDMTIAMMKDFGVDVTKSETEEYTYHIPKAVYQNPQEYVVESDASSATYPLAFAALTNSSCTIPNIGSSSLQGDARFAVDVLKPMGCTVEQTSKSTTVTGPPIGTLKALPEIDMEPMTDAFLTASVVAAVSQGTTTISGIANQRVKECNRIKAMVDELAKFGVSADETEDGISIHGVQLKDLKTPGGRGVKTYDDHRVAMSFSLLAGLCKDPVLIQERSTTGKTWPGWWDVLHSKFNAKLEGHEYIRQRSGSLRNGDRSIVIIGMRAAGKTTLSRWLAEHLNFKLLDLDQYLEKKLAVDIKLLVKEKGWDYFREKETEVLNECLEKFGKGHILATGGGIVEGEKPREALKNYTKSGGIVLHLHRDLKETVNFLSKDPTRPAYSDDIEEVWKRREKWYHECSNYHFYSTHCTSEAEFANLKLVFAKFVSKITGDDTFVLPATRSTFVTLTYPDLRKVPSLIKDVSETSNAVELRVDLLANQETAYIAEQIGLLRSVATDLPILYTVRTKSQCGQYPDEDEEGMRKLLMFGLKMGVDIIDLQLISSPSTIAEVISKRGHTKIIASHHDFTGDLKWDNVEWKNKYAQGVSIDADFVKLVGMAKTFDDNLLLENFRRQNTEKPLIGINMGPQGKLSRVLNKVLTPVTHELITDKPIGVGQLSLKEINQALFQIGGLLEKEFWVVGFPVSHSRSPALHNAAYAALGLPYKFDIFETDDAEKVYTQLMQKPTFGGLAVTIPLKLDIKKYCTELSESAKLIGAVNTVTPIADGRKGFLGDNTDWIGIANSFKKADFALASGVTNGLVVGGGGTSRAAIFALHSLGCQKIYLLNRTESKLQDLVDSFPDYDLEILLEKNASSVSIGLVVSCVPGDKALDETLMKKLDGVLSNNKGDKQTRPLLLEAAYKPRVTPIMELAKEKYDWTVIPGVEMLVNQGEAQFKLHTGYTAPYKVIHSAVLNE</sequence>
<gene>
    <name evidence="1" type="primary">ARO1-2</name>
    <name type="ORF">LELG_05759</name>
</gene>